<sequence>MVKPLVSYGSVMSGVGGEGVPSALAILASWGWTFDTPNHESGISPDTTPADSIRGAAVASPDQPLHGGPEREATAPSFSPTRADDGPPCTDGPYVTFDTLFMVSSIDELGRRQLTDTIRKDLRLSLAKFSIACTKTSSFSGNAPRHHRRGAFQRGTRAPRSNKSLQMFVLCKRAHAARVREQLRVVIQSRKPRKYYTRSSDGRLCPAVPVFVHEFVSSEPMRLHRDNVMLASGAE</sequence>
<gene>
    <name type="ORF">UL3</name>
</gene>
<keyword id="KW-1048">Host nucleus</keyword>
<keyword id="KW-0597">Phosphoprotein</keyword>
<keyword id="KW-1185">Reference proteome</keyword>
<proteinExistence type="inferred from homology"/>
<comment type="subcellular location">
    <subcellularLocation>
        <location evidence="1">Host nucleus</location>
    </subcellularLocation>
</comment>
<comment type="PTM">
    <text evidence="1">Phosphorylated.</text>
</comment>
<comment type="similarity">
    <text evidence="3">Belongs to the alphaherpesvirinae HHV-1 UL3 family.</text>
</comment>
<comment type="caution">
    <text evidence="3">It is uncertain whether Met-1 or Met-12 is the initiator.</text>
</comment>
<feature type="chain" id="PRO_0000115892" description="Nuclear phosphoprotein UL3">
    <location>
        <begin position="1"/>
        <end position="235"/>
    </location>
</feature>
<feature type="region of interest" description="Disordered" evidence="2">
    <location>
        <begin position="38"/>
        <end position="89"/>
    </location>
</feature>
<feature type="region of interest" description="Disordered" evidence="2">
    <location>
        <begin position="138"/>
        <end position="157"/>
    </location>
</feature>
<feature type="compositionally biased region" description="Polar residues" evidence="2">
    <location>
        <begin position="38"/>
        <end position="50"/>
    </location>
</feature>
<organismHost>
    <name type="scientific">Homo sapiens</name>
    <name type="common">Human</name>
    <dbReference type="NCBI Taxonomy" id="9606"/>
</organismHost>
<evidence type="ECO:0000250" key="1"/>
<evidence type="ECO:0000256" key="2">
    <source>
        <dbReference type="SAM" id="MobiDB-lite"/>
    </source>
</evidence>
<evidence type="ECO:0000305" key="3"/>
<organism>
    <name type="scientific">Human herpesvirus 1 (strain 17)</name>
    <name type="common">HHV-1</name>
    <name type="synonym">Human herpes simplex virus 1</name>
    <dbReference type="NCBI Taxonomy" id="10299"/>
    <lineage>
        <taxon>Viruses</taxon>
        <taxon>Duplodnaviria</taxon>
        <taxon>Heunggongvirae</taxon>
        <taxon>Peploviricota</taxon>
        <taxon>Herviviricetes</taxon>
        <taxon>Herpesvirales</taxon>
        <taxon>Orthoherpesviridae</taxon>
        <taxon>Alphaherpesvirinae</taxon>
        <taxon>Simplexvirus</taxon>
        <taxon>Simplexvirus humanalpha1</taxon>
        <taxon>Human herpesvirus 1</taxon>
    </lineage>
</organism>
<dbReference type="EMBL" id="X14112">
    <property type="protein sequence ID" value="CAA32339.1"/>
    <property type="molecule type" value="Genomic_DNA"/>
</dbReference>
<dbReference type="EMBL" id="D00373">
    <property type="protein sequence ID" value="BAA00275.1"/>
    <property type="molecule type" value="Genomic_DNA"/>
</dbReference>
<dbReference type="EMBL" id="DQ073426">
    <property type="protein sequence ID" value="AAZ22830.1"/>
    <property type="molecule type" value="Genomic_DNA"/>
</dbReference>
<dbReference type="EMBL" id="FJ593289">
    <property type="protein sequence ID" value="ACM62225.1"/>
    <property type="molecule type" value="Genomic_DNA"/>
</dbReference>
<dbReference type="EMBL" id="DQ889502">
    <property type="protein sequence ID" value="ABI63465.1"/>
    <property type="molecule type" value="Genomic_DNA"/>
</dbReference>
<dbReference type="PIR" id="C28133">
    <property type="entry name" value="WMBEX3"/>
</dbReference>
<dbReference type="Proteomes" id="UP000009294">
    <property type="component" value="Segment"/>
</dbReference>
<dbReference type="Proteomes" id="UP000180652">
    <property type="component" value="Segment"/>
</dbReference>
<dbReference type="GO" id="GO:0042025">
    <property type="term" value="C:host cell nucleus"/>
    <property type="evidence" value="ECO:0007669"/>
    <property type="project" value="UniProtKB-SubCell"/>
</dbReference>
<dbReference type="InterPro" id="IPR005035">
    <property type="entry name" value="Herpes_UL3"/>
</dbReference>
<dbReference type="Pfam" id="PF03369">
    <property type="entry name" value="Herpes_UL3"/>
    <property type="match status" value="1"/>
</dbReference>
<name>NP03_HHV11</name>
<reference key="1">
    <citation type="journal article" date="1988" name="J. Gen. Virol.">
        <title>The DNA sequences of the long repeat region and adjoining parts of the long unique region in the genome of herpes simplex virus type 1.</title>
        <authorList>
            <person name="Perry L.J."/>
            <person name="McGeoch D.J."/>
        </authorList>
    </citation>
    <scope>NUCLEOTIDE SEQUENCE [GENOMIC DNA]</scope>
</reference>
<reference key="2">
    <citation type="journal article" date="1988" name="J. Gen. Virol.">
        <title>The complete DNA sequence of the long unique region in the genome of herpes simplex virus type 1.</title>
        <authorList>
            <person name="McGeoch D.J."/>
            <person name="Dalrymple M.A."/>
            <person name="Davison A.J."/>
            <person name="Dolan A."/>
            <person name="Frame M.C."/>
            <person name="McNab D."/>
            <person name="Perry L.J."/>
            <person name="Scott J.E."/>
            <person name="Taylor P."/>
        </authorList>
    </citation>
    <scope>NUCLEOTIDE SEQUENCE [GENOMIC DNA]</scope>
</reference>
<reference key="3">
    <citation type="journal article" date="2006" name="Mol. Ther.">
        <title>Oncolytic viruses derived from the gamma34.5-deleted herpes simplex virus recombinant R3616 encode a truncated UL3 protein.</title>
        <authorList>
            <person name="Dambach M.J."/>
            <person name="Trecki J."/>
            <person name="Martin N."/>
            <person name="Markovitz N.S."/>
        </authorList>
    </citation>
    <scope>NUCLEOTIDE SEQUENCE [GENOMIC DNA]</scope>
    <source>
        <strain>Patton</strain>
    </source>
</reference>
<reference key="4">
    <citation type="journal article" date="2007" name="Microbes Infect.">
        <title>Determination and analysis of the DNA sequence of highly attenuated herpes simplex virus type 1 mutant HF10, a potential oncolytic virus.</title>
        <authorList>
            <person name="Ushijima Y."/>
            <person name="Luo C."/>
            <person name="Goshima F."/>
            <person name="Yamauchi Y."/>
            <person name="Kimura H."/>
            <person name="Nishiyama Y."/>
        </authorList>
    </citation>
    <scope>NUCLEOTIDE SEQUENCE [LARGE SCALE GENOMIC DNA]</scope>
    <source>
        <strain>Nonneuroinvasive mutant HF10</strain>
    </source>
</reference>
<reference key="5">
    <citation type="submission" date="2008-12" db="EMBL/GenBank/DDBJ databases">
        <title>Herpes simplex virus type 1 bacterial artificial chromosome.</title>
        <authorList>
            <person name="Cunningham C."/>
            <person name="Davison A.J."/>
        </authorList>
    </citation>
    <scope>NUCLEOTIDE SEQUENCE [LARGE SCALE GENOMIC DNA]</scope>
    <source>
        <strain>17 syn+</strain>
    </source>
</reference>
<accession>P10187</accession>
<accession>Q76WT5</accession>
<protein>
    <recommendedName>
        <fullName>Nuclear phosphoprotein UL3</fullName>
    </recommendedName>
</protein>